<protein>
    <recommendedName>
        <fullName evidence="1">Small ribosomal subunit protein uS4</fullName>
    </recommendedName>
    <alternativeName>
        <fullName evidence="3">30S ribosomal protein S4</fullName>
    </alternativeName>
</protein>
<reference key="1">
    <citation type="submission" date="2008-02" db="EMBL/GenBank/DDBJ databases">
        <title>Complete sequence of Synechococcus sp. PCC 7002.</title>
        <authorList>
            <person name="Li T."/>
            <person name="Zhao J."/>
            <person name="Zhao C."/>
            <person name="Liu Z."/>
            <person name="Zhao F."/>
            <person name="Marquardt J."/>
            <person name="Nomura C.T."/>
            <person name="Persson S."/>
            <person name="Detter J.C."/>
            <person name="Richardson P.M."/>
            <person name="Lanz C."/>
            <person name="Schuster S.C."/>
            <person name="Wang J."/>
            <person name="Li S."/>
            <person name="Huang X."/>
            <person name="Cai T."/>
            <person name="Yu Z."/>
            <person name="Luo J."/>
            <person name="Zhao J."/>
            <person name="Bryant D.A."/>
        </authorList>
    </citation>
    <scope>NUCLEOTIDE SEQUENCE [LARGE SCALE GENOMIC DNA]</scope>
    <source>
        <strain>ATCC 27264 / PCC 7002 / PR-6</strain>
    </source>
</reference>
<comment type="function">
    <text evidence="1">One of the primary rRNA binding proteins, it binds directly to 16S rRNA where it nucleates assembly of the body of the 30S subunit.</text>
</comment>
<comment type="function">
    <text evidence="1">With S5 and S12 plays an important role in translational accuracy.</text>
</comment>
<comment type="subunit">
    <text evidence="1">Part of the 30S ribosomal subunit. Contacts protein S5. The interaction surface between S4 and S5 is involved in control of translational fidelity.</text>
</comment>
<comment type="similarity">
    <text evidence="1">Belongs to the universal ribosomal protein uS4 family.</text>
</comment>
<name>RS4_PICP2</name>
<accession>B1XI84</accession>
<sequence length="202" mass="23281">MARYRGARLRITRRLGELPGLTRKSARREYPPGQHGQGRRKRSEYAIRLEEKQKLRFNYGVSEKQLIRYVRKARRTTGSTGQTILQLLEMRLDNTVFRLGMAGTIPGARQLVNHGHILVNGRVVDIPSYQCRPGDVITVRDRDRSRKLIEANMEFPGLANIPSHLEFDKPTLTGKVNGIIEREWVALQINELLVVEYYSRMA</sequence>
<evidence type="ECO:0000255" key="1">
    <source>
        <dbReference type="HAMAP-Rule" id="MF_01306"/>
    </source>
</evidence>
<evidence type="ECO:0000256" key="2">
    <source>
        <dbReference type="SAM" id="MobiDB-lite"/>
    </source>
</evidence>
<evidence type="ECO:0000305" key="3"/>
<feature type="chain" id="PRO_1000140804" description="Small ribosomal subunit protein uS4">
    <location>
        <begin position="1"/>
        <end position="202"/>
    </location>
</feature>
<feature type="domain" description="S4 RNA-binding" evidence="1">
    <location>
        <begin position="90"/>
        <end position="152"/>
    </location>
</feature>
<feature type="region of interest" description="Disordered" evidence="2">
    <location>
        <begin position="18"/>
        <end position="44"/>
    </location>
</feature>
<dbReference type="EMBL" id="CP000951">
    <property type="protein sequence ID" value="ACB00069.1"/>
    <property type="molecule type" value="Genomic_DNA"/>
</dbReference>
<dbReference type="RefSeq" id="WP_012307690.1">
    <property type="nucleotide sequence ID" value="NZ_JAHHPU010000002.1"/>
</dbReference>
<dbReference type="SMR" id="B1XI84"/>
<dbReference type="STRING" id="32049.SYNPCC7002_A2083"/>
<dbReference type="KEGG" id="syp:SYNPCC7002_A2083"/>
<dbReference type="eggNOG" id="COG0522">
    <property type="taxonomic scope" value="Bacteria"/>
</dbReference>
<dbReference type="HOGENOM" id="CLU_092403_0_5_3"/>
<dbReference type="Proteomes" id="UP000001688">
    <property type="component" value="Chromosome"/>
</dbReference>
<dbReference type="GO" id="GO:0015935">
    <property type="term" value="C:small ribosomal subunit"/>
    <property type="evidence" value="ECO:0007669"/>
    <property type="project" value="InterPro"/>
</dbReference>
<dbReference type="GO" id="GO:0019843">
    <property type="term" value="F:rRNA binding"/>
    <property type="evidence" value="ECO:0007669"/>
    <property type="project" value="UniProtKB-UniRule"/>
</dbReference>
<dbReference type="GO" id="GO:0003735">
    <property type="term" value="F:structural constituent of ribosome"/>
    <property type="evidence" value="ECO:0007669"/>
    <property type="project" value="InterPro"/>
</dbReference>
<dbReference type="GO" id="GO:0042274">
    <property type="term" value="P:ribosomal small subunit biogenesis"/>
    <property type="evidence" value="ECO:0007669"/>
    <property type="project" value="TreeGrafter"/>
</dbReference>
<dbReference type="GO" id="GO:0006412">
    <property type="term" value="P:translation"/>
    <property type="evidence" value="ECO:0007669"/>
    <property type="project" value="UniProtKB-UniRule"/>
</dbReference>
<dbReference type="CDD" id="cd00165">
    <property type="entry name" value="S4"/>
    <property type="match status" value="1"/>
</dbReference>
<dbReference type="FunFam" id="3.10.290.10:FF:000001">
    <property type="entry name" value="30S ribosomal protein S4"/>
    <property type="match status" value="1"/>
</dbReference>
<dbReference type="FunFam" id="1.10.1050.10:FF:000002">
    <property type="entry name" value="30S ribosomal protein S4, chloroplastic"/>
    <property type="match status" value="1"/>
</dbReference>
<dbReference type="Gene3D" id="1.10.1050.10">
    <property type="entry name" value="Ribosomal Protein S4 Delta 41, Chain A, domain 1"/>
    <property type="match status" value="1"/>
</dbReference>
<dbReference type="Gene3D" id="3.10.290.10">
    <property type="entry name" value="RNA-binding S4 domain"/>
    <property type="match status" value="1"/>
</dbReference>
<dbReference type="HAMAP" id="MF_01306_B">
    <property type="entry name" value="Ribosomal_uS4_B"/>
    <property type="match status" value="1"/>
</dbReference>
<dbReference type="InterPro" id="IPR022801">
    <property type="entry name" value="Ribosomal_uS4"/>
</dbReference>
<dbReference type="InterPro" id="IPR005709">
    <property type="entry name" value="Ribosomal_uS4_bac-type"/>
</dbReference>
<dbReference type="InterPro" id="IPR018079">
    <property type="entry name" value="Ribosomal_uS4_CS"/>
</dbReference>
<dbReference type="InterPro" id="IPR001912">
    <property type="entry name" value="Ribosomal_uS4_N"/>
</dbReference>
<dbReference type="InterPro" id="IPR002942">
    <property type="entry name" value="S4_RNA-bd"/>
</dbReference>
<dbReference type="InterPro" id="IPR036986">
    <property type="entry name" value="S4_RNA-bd_sf"/>
</dbReference>
<dbReference type="NCBIfam" id="NF003717">
    <property type="entry name" value="PRK05327.1"/>
    <property type="match status" value="1"/>
</dbReference>
<dbReference type="NCBIfam" id="TIGR01017">
    <property type="entry name" value="rpsD_bact"/>
    <property type="match status" value="1"/>
</dbReference>
<dbReference type="PANTHER" id="PTHR11831">
    <property type="entry name" value="30S 40S RIBOSOMAL PROTEIN"/>
    <property type="match status" value="1"/>
</dbReference>
<dbReference type="PANTHER" id="PTHR11831:SF4">
    <property type="entry name" value="SMALL RIBOSOMAL SUBUNIT PROTEIN US4M"/>
    <property type="match status" value="1"/>
</dbReference>
<dbReference type="Pfam" id="PF00163">
    <property type="entry name" value="Ribosomal_S4"/>
    <property type="match status" value="1"/>
</dbReference>
<dbReference type="Pfam" id="PF01479">
    <property type="entry name" value="S4"/>
    <property type="match status" value="1"/>
</dbReference>
<dbReference type="SMART" id="SM01390">
    <property type="entry name" value="Ribosomal_S4"/>
    <property type="match status" value="1"/>
</dbReference>
<dbReference type="SMART" id="SM00363">
    <property type="entry name" value="S4"/>
    <property type="match status" value="1"/>
</dbReference>
<dbReference type="SUPFAM" id="SSF55174">
    <property type="entry name" value="Alpha-L RNA-binding motif"/>
    <property type="match status" value="1"/>
</dbReference>
<dbReference type="PROSITE" id="PS00632">
    <property type="entry name" value="RIBOSOMAL_S4"/>
    <property type="match status" value="1"/>
</dbReference>
<dbReference type="PROSITE" id="PS50889">
    <property type="entry name" value="S4"/>
    <property type="match status" value="1"/>
</dbReference>
<organism>
    <name type="scientific">Picosynechococcus sp. (strain ATCC 27264 / PCC 7002 / PR-6)</name>
    <name type="common">Agmenellum quadruplicatum</name>
    <dbReference type="NCBI Taxonomy" id="32049"/>
    <lineage>
        <taxon>Bacteria</taxon>
        <taxon>Bacillati</taxon>
        <taxon>Cyanobacteriota</taxon>
        <taxon>Cyanophyceae</taxon>
        <taxon>Oscillatoriophycideae</taxon>
        <taxon>Chroococcales</taxon>
        <taxon>Geminocystaceae</taxon>
        <taxon>Picosynechococcus</taxon>
    </lineage>
</organism>
<keyword id="KW-1185">Reference proteome</keyword>
<keyword id="KW-0687">Ribonucleoprotein</keyword>
<keyword id="KW-0689">Ribosomal protein</keyword>
<keyword id="KW-0694">RNA-binding</keyword>
<keyword id="KW-0699">rRNA-binding</keyword>
<proteinExistence type="inferred from homology"/>
<gene>
    <name evidence="1" type="primary">rpsD</name>
    <name evidence="1" type="synonym">rps4</name>
    <name type="ordered locus">SYNPCC7002_A2083</name>
</gene>